<sequence length="723" mass="80694">MAALCEAFTLCGLGPAGGVGLGSGLLALEPGADPDHVLLTDRGRTTTLFKVSDQKPLGCWSVKHGQIITCPVVCNFETHEYIAVHDNKVLRIWKDEDVNLDKVFKATLSAEVYRIHSLPHAEPLVLFKGGGVRTLDVLLEAPQQEIENVISDEVIKWSEAFLESRQPVLIFVTEKDGDFFVYVQKPKMRSLHKYKLEQQELCNPLSFTAYIKKQIITLLCLYSSDSVYKVLIPLQQSSEEEEQTSSKSLLLNLSISGSVLKGTSFVVLDKDHVAVLGSLAASGEESKECLTIWNTKFQTLQASKELPLGTSGQLWCYGEKFFFTHGKVLTVVIYKCETSSLAAAVGKLKDSQTSDLSSFVNWNTLGDEELLVSLQSQQSVALKSESKMTLRSKKSAVANIQPDTSTVGQFLLSIKDASTAAVEDQLRQLLSKAQMPDFQATIGCIISALINRCKTDPKFYPRNFLVQMIQKGELSYSLCPDLMAVALEKKDVHLLQICLQRFPDIPEEITYACLKVFLSISDDYLERTDVNLESVISYIDIEPNNKEVKTEVVENGFNTELEEDGCDVTGMKETHMMDSVEFCPVGPQKAALLNAVLHSAYSETFLLPHLKDLPAQQAVLFLRYLHYLYVKCSEKINTTLPGILSPTISQIMDWMCLLLDAHFTVMVMLPEAKGLLSSMHRFVRAQVRLYSELNKIEGSLQELQRIKCQKHSQAYSIEVLELI</sequence>
<organism>
    <name type="scientific">Gallus gallus</name>
    <name type="common">Chicken</name>
    <dbReference type="NCBI Taxonomy" id="9031"/>
    <lineage>
        <taxon>Eukaryota</taxon>
        <taxon>Metazoa</taxon>
        <taxon>Chordata</taxon>
        <taxon>Craniata</taxon>
        <taxon>Vertebrata</taxon>
        <taxon>Euteleostomi</taxon>
        <taxon>Archelosauria</taxon>
        <taxon>Archosauria</taxon>
        <taxon>Dinosauria</taxon>
        <taxon>Saurischia</taxon>
        <taxon>Theropoda</taxon>
        <taxon>Coelurosauria</taxon>
        <taxon>Aves</taxon>
        <taxon>Neognathae</taxon>
        <taxon>Galloanserae</taxon>
        <taxon>Galliformes</taxon>
        <taxon>Phasianidae</taxon>
        <taxon>Phasianinae</taxon>
        <taxon>Gallus</taxon>
    </lineage>
</organism>
<gene>
    <name type="primary">NOL11</name>
    <name type="ORF">RCJMB04_7e21</name>
</gene>
<feature type="chain" id="PRO_0000096930" description="Nucleolar protein 11">
    <location>
        <begin position="1"/>
        <end position="723"/>
    </location>
</feature>
<keyword id="KW-0010">Activator</keyword>
<keyword id="KW-0539">Nucleus</keyword>
<keyword id="KW-1185">Reference proteome</keyword>
<keyword id="KW-0690">Ribosome biogenesis</keyword>
<keyword id="KW-0698">rRNA processing</keyword>
<keyword id="KW-0804">Transcription</keyword>
<keyword id="KW-0805">Transcription regulation</keyword>
<accession>Q5ZL79</accession>
<name>NOL11_CHICK</name>
<evidence type="ECO:0000250" key="1"/>
<evidence type="ECO:0000250" key="2">
    <source>
        <dbReference type="UniProtKB" id="Q9H8H0"/>
    </source>
</evidence>
<protein>
    <recommendedName>
        <fullName>Nucleolar protein 11</fullName>
    </recommendedName>
</protein>
<dbReference type="EMBL" id="AJ719855">
    <property type="protein sequence ID" value="CAG31514.1"/>
    <property type="molecule type" value="mRNA"/>
</dbReference>
<dbReference type="RefSeq" id="NP_001006210.1">
    <property type="nucleotide sequence ID" value="NM_001006210.1"/>
</dbReference>
<dbReference type="SMR" id="Q5ZL79"/>
<dbReference type="FunCoup" id="Q5ZL79">
    <property type="interactions" value="2690"/>
</dbReference>
<dbReference type="STRING" id="9031.ENSGALP00000005775"/>
<dbReference type="PaxDb" id="9031-ENSGALP00000005775"/>
<dbReference type="GeneID" id="417423"/>
<dbReference type="KEGG" id="gga:417423"/>
<dbReference type="CTD" id="25926"/>
<dbReference type="VEuPathDB" id="HostDB:geneid_417423"/>
<dbReference type="eggNOG" id="ENOG502SB74">
    <property type="taxonomic scope" value="Eukaryota"/>
</dbReference>
<dbReference type="InParanoid" id="Q5ZL79"/>
<dbReference type="OrthoDB" id="6502630at2759"/>
<dbReference type="PhylomeDB" id="Q5ZL79"/>
<dbReference type="PRO" id="PR:Q5ZL79"/>
<dbReference type="Proteomes" id="UP000000539">
    <property type="component" value="Unassembled WGS sequence"/>
</dbReference>
<dbReference type="GO" id="GO:0005730">
    <property type="term" value="C:nucleolus"/>
    <property type="evidence" value="ECO:0000250"/>
    <property type="project" value="UniProtKB"/>
</dbReference>
<dbReference type="GO" id="GO:0030490">
    <property type="term" value="P:maturation of SSU-rRNA"/>
    <property type="evidence" value="ECO:0000250"/>
    <property type="project" value="UniProtKB"/>
</dbReference>
<dbReference type="GO" id="GO:1901838">
    <property type="term" value="P:positive regulation of transcription of nucleolar large rRNA by RNA polymerase I"/>
    <property type="evidence" value="ECO:0000250"/>
    <property type="project" value="UniProtKB"/>
</dbReference>
<dbReference type="InterPro" id="IPR042859">
    <property type="entry name" value="NOL11"/>
</dbReference>
<dbReference type="InterPro" id="IPR048897">
    <property type="entry name" value="Nol11_C"/>
</dbReference>
<dbReference type="InterPro" id="IPR012584">
    <property type="entry name" value="NOL11_N"/>
</dbReference>
<dbReference type="PANTHER" id="PTHR15633">
    <property type="entry name" value="NUCLEOLAR PROTEIN 11"/>
    <property type="match status" value="1"/>
</dbReference>
<dbReference type="PANTHER" id="PTHR15633:SF2">
    <property type="entry name" value="NUCLEOLAR PROTEIN 11"/>
    <property type="match status" value="1"/>
</dbReference>
<dbReference type="Pfam" id="PF20998">
    <property type="entry name" value="Nol11_C"/>
    <property type="match status" value="1"/>
</dbReference>
<dbReference type="Pfam" id="PF08168">
    <property type="entry name" value="NOL11_N"/>
    <property type="match status" value="1"/>
</dbReference>
<comment type="function">
    <text evidence="2">Ribosome biogenesis factor. May be required for both optimal rDNA transcription and pre-rRNA processing (By similarity).</text>
</comment>
<comment type="subcellular location">
    <subcellularLocation>
        <location evidence="1 2">Nucleus</location>
        <location evidence="1 2">Nucleolus</location>
    </subcellularLocation>
</comment>
<reference key="1">
    <citation type="journal article" date="2005" name="Genome Biol.">
        <title>Full-length cDNAs from chicken bursal lymphocytes to facilitate gene function analysis.</title>
        <authorList>
            <person name="Caldwell R.B."/>
            <person name="Kierzek A.M."/>
            <person name="Arakawa H."/>
            <person name="Bezzubov Y."/>
            <person name="Zaim J."/>
            <person name="Fiedler P."/>
            <person name="Kutter S."/>
            <person name="Blagodatski A."/>
            <person name="Kostovska D."/>
            <person name="Koter M."/>
            <person name="Plachy J."/>
            <person name="Carninci P."/>
            <person name="Hayashizaki Y."/>
            <person name="Buerstedde J.-M."/>
        </authorList>
    </citation>
    <scope>NUCLEOTIDE SEQUENCE [LARGE SCALE MRNA]</scope>
    <source>
        <strain>CB</strain>
        <tissue>Bursa of Fabricius</tissue>
    </source>
</reference>
<proteinExistence type="evidence at transcript level"/>